<protein>
    <recommendedName>
        <fullName>Band 4.1-like protein 1</fullName>
    </recommendedName>
    <alternativeName>
        <fullName evidence="9">Erythrocyte membrane protein band 4.1-like 1</fullName>
    </alternativeName>
    <alternativeName>
        <fullName>Neuronal protein 4.1</fullName>
        <shortName>4.1N</shortName>
    </alternativeName>
</protein>
<evidence type="ECO:0000250" key="1"/>
<evidence type="ECO:0000250" key="2">
    <source>
        <dbReference type="UniProtKB" id="Q9H4G0"/>
    </source>
</evidence>
<evidence type="ECO:0000250" key="3">
    <source>
        <dbReference type="UniProtKB" id="Q9WTP0"/>
    </source>
</evidence>
<evidence type="ECO:0000255" key="4">
    <source>
        <dbReference type="PROSITE-ProRule" id="PRU00084"/>
    </source>
</evidence>
<evidence type="ECO:0000256" key="5">
    <source>
        <dbReference type="SAM" id="MobiDB-lite"/>
    </source>
</evidence>
<evidence type="ECO:0000303" key="6">
    <source>
    </source>
</evidence>
<evidence type="ECO:0000303" key="7">
    <source>
    </source>
</evidence>
<evidence type="ECO:0000305" key="8"/>
<evidence type="ECO:0000312" key="9">
    <source>
        <dbReference type="MGI" id="MGI:103010"/>
    </source>
</evidence>
<evidence type="ECO:0007744" key="10">
    <source>
    </source>
</evidence>
<evidence type="ECO:0007744" key="11">
    <source>
    </source>
</evidence>
<evidence type="ECO:0007744" key="12">
    <source>
    </source>
</evidence>
<feature type="chain" id="PRO_0000219396" description="Band 4.1-like protein 1">
    <location>
        <begin position="1"/>
        <end position="879"/>
    </location>
</feature>
<feature type="domain" description="FERM" evidence="4">
    <location>
        <begin position="97"/>
        <end position="378"/>
    </location>
</feature>
<feature type="region of interest" description="Disordered" evidence="5">
    <location>
        <begin position="1"/>
        <end position="88"/>
    </location>
</feature>
<feature type="region of interest" description="Hydrophilic">
    <location>
        <begin position="381"/>
        <end position="482"/>
    </location>
</feature>
<feature type="region of interest" description="Disordered" evidence="5">
    <location>
        <begin position="428"/>
        <end position="501"/>
    </location>
</feature>
<feature type="region of interest" description="Spectrin--actin-binding">
    <location>
        <begin position="483"/>
        <end position="541"/>
    </location>
</feature>
<feature type="region of interest" description="Disordered" evidence="5">
    <location>
        <begin position="514"/>
        <end position="594"/>
    </location>
</feature>
<feature type="region of interest" description="Disordered" evidence="5">
    <location>
        <begin position="657"/>
        <end position="696"/>
    </location>
</feature>
<feature type="region of interest" description="C-terminal (CTD)">
    <location>
        <begin position="743"/>
        <end position="879"/>
    </location>
</feature>
<feature type="compositionally biased region" description="Low complexity" evidence="5">
    <location>
        <begin position="17"/>
        <end position="35"/>
    </location>
</feature>
<feature type="compositionally biased region" description="Basic and acidic residues" evidence="5">
    <location>
        <begin position="38"/>
        <end position="50"/>
    </location>
</feature>
<feature type="compositionally biased region" description="Polar residues" evidence="5">
    <location>
        <begin position="76"/>
        <end position="87"/>
    </location>
</feature>
<feature type="compositionally biased region" description="Basic and acidic residues" evidence="5">
    <location>
        <begin position="444"/>
        <end position="501"/>
    </location>
</feature>
<feature type="compositionally biased region" description="Basic and acidic residues" evidence="5">
    <location>
        <begin position="514"/>
        <end position="538"/>
    </location>
</feature>
<feature type="compositionally biased region" description="Basic and acidic residues" evidence="5">
    <location>
        <begin position="550"/>
        <end position="577"/>
    </location>
</feature>
<feature type="modified residue" description="Phosphothreonine" evidence="12">
    <location>
        <position position="30"/>
    </location>
</feature>
<feature type="modified residue" description="Phosphoserine" evidence="2">
    <location>
        <position position="75"/>
    </location>
</feature>
<feature type="modified residue" description="Phosphothreonine" evidence="2">
    <location>
        <position position="79"/>
    </location>
</feature>
<feature type="modified residue" description="Phosphotyrosine" evidence="11">
    <location>
        <position position="343"/>
    </location>
</feature>
<feature type="modified residue" description="Phosphoserine" evidence="12">
    <location>
        <position position="378"/>
    </location>
</feature>
<feature type="modified residue" description="Phosphoserine" evidence="12">
    <location>
        <position position="430"/>
    </location>
</feature>
<feature type="modified residue" description="Phosphoserine" evidence="2">
    <location>
        <position position="437"/>
    </location>
</feature>
<feature type="modified residue" description="Phosphoserine" evidence="2">
    <location>
        <position position="461"/>
    </location>
</feature>
<feature type="modified residue" description="Phosphoserine" evidence="3">
    <location>
        <position position="466"/>
    </location>
</feature>
<feature type="modified residue" description="Phosphothreonine" evidence="2">
    <location>
        <position position="475"/>
    </location>
</feature>
<feature type="modified residue" description="Phosphoserine" evidence="2">
    <location>
        <position position="510"/>
    </location>
</feature>
<feature type="modified residue" description="Phosphoserine" evidence="2">
    <location>
        <position position="540"/>
    </location>
</feature>
<feature type="modified residue" description="Phosphoserine" evidence="2">
    <location>
        <position position="541"/>
    </location>
</feature>
<feature type="modified residue" description="Phosphoserine" evidence="12">
    <location>
        <position position="544"/>
    </location>
</feature>
<feature type="modified residue" description="Phosphoserine" evidence="12">
    <location>
        <position position="546"/>
    </location>
</feature>
<feature type="modified residue" description="Phosphothreonine" evidence="10 12">
    <location>
        <position position="550"/>
    </location>
</feature>
<feature type="modified residue" description="Phosphoserine" evidence="2">
    <location>
        <position position="564"/>
    </location>
</feature>
<feature type="modified residue" description="Phosphoserine" evidence="12">
    <location>
        <position position="578"/>
    </location>
</feature>
<feature type="modified residue" description="Phosphoserine" evidence="12">
    <location>
        <position position="639"/>
    </location>
</feature>
<feature type="modified residue" description="Phosphoserine" evidence="12">
    <location>
        <position position="648"/>
    </location>
</feature>
<feature type="modified residue" description="Phosphoserine" evidence="12">
    <location>
        <position position="650"/>
    </location>
</feature>
<feature type="modified residue" description="Phosphoserine" evidence="12">
    <location>
        <position position="665"/>
    </location>
</feature>
<feature type="modified residue" description="Phosphoserine" evidence="12">
    <location>
        <position position="666"/>
    </location>
</feature>
<feature type="modified residue" description="Phosphoserine" evidence="12">
    <location>
        <position position="671"/>
    </location>
</feature>
<feature type="modified residue" description="Phosphoserine" evidence="12">
    <location>
        <position position="677"/>
    </location>
</feature>
<feature type="modified residue" description="Phosphoserine" evidence="12">
    <location>
        <position position="684"/>
    </location>
</feature>
<feature type="modified residue" description="Phosphothreonine" evidence="12">
    <location>
        <position position="685"/>
    </location>
</feature>
<feature type="modified residue" description="Phosphoserine" evidence="12">
    <location>
        <position position="721"/>
    </location>
</feature>
<feature type="modified residue" description="Phosphoserine" evidence="2">
    <location>
        <position position="782"/>
    </location>
</feature>
<feature type="modified residue" description="Phosphoserine" evidence="3">
    <location>
        <position position="868"/>
    </location>
</feature>
<feature type="splice variant" id="VSP_023964" description="In isoform 2 and isoform 3." evidence="6 7">
    <location>
        <begin position="484"/>
        <end position="495"/>
    </location>
</feature>
<feature type="splice variant" id="VSP_023965" description="In isoform 3." evidence="7">
    <location>
        <begin position="556"/>
        <end position="691"/>
    </location>
</feature>
<feature type="sequence conflict" description="In Ref. 2; BAC65533." evidence="8" ref="2">
    <original>A</original>
    <variation>T</variation>
    <location>
        <position position="26"/>
    </location>
</feature>
<feature type="sequence conflict" description="In Ref. 1; AAC68583 and 3; BAE27810/BAE32774." evidence="8" ref="1 3">
    <original>F</original>
    <variation>Y</variation>
    <location>
        <position position="142"/>
    </location>
</feature>
<feature type="sequence conflict" description="In Ref. 3; BAE27810." evidence="8" ref="3">
    <location>
        <position position="434"/>
    </location>
</feature>
<feature type="sequence conflict" description="In Ref. 1; AAC68583 and 3; BAE27810/BAE32774." evidence="8" ref="1 3">
    <original>E</original>
    <variation>D</variation>
    <location>
        <position position="451"/>
    </location>
</feature>
<feature type="sequence conflict" description="In Ref. 1; AAC68583." evidence="8" ref="1">
    <original>M</original>
    <variation>T</variation>
    <location>
        <position position="580"/>
    </location>
</feature>
<feature type="sequence conflict" description="In Ref. 1; AAC68583." evidence="8" ref="1">
    <original>Q</original>
    <variation>R</variation>
    <location>
        <position position="659"/>
    </location>
</feature>
<feature type="sequence conflict" description="In Ref. 3; BAE27810." evidence="8" ref="3">
    <original>K</original>
    <variation>R</variation>
    <location>
        <position position="708"/>
    </location>
</feature>
<gene>
    <name evidence="9" type="primary">Epb41l1</name>
    <name type="synonym">Epb4</name>
    <name evidence="9" type="synonym">Epb4.1l1</name>
    <name evidence="9" type="synonym">Kiaa0338</name>
</gene>
<keyword id="KW-0009">Actin-binding</keyword>
<keyword id="KW-0025">Alternative splicing</keyword>
<keyword id="KW-0963">Cytoplasm</keyword>
<keyword id="KW-0206">Cytoskeleton</keyword>
<keyword id="KW-0597">Phosphoprotein</keyword>
<keyword id="KW-1185">Reference proteome</keyword>
<reference key="1">
    <citation type="journal article" date="1999" name="J. Neurosci.">
        <title>A novel neuron-enriched homolog of the erythrocyte membrane cytoskeletal protein 4.1.</title>
        <authorList>
            <person name="Walensky L.D."/>
            <person name="Blackshaw S."/>
            <person name="Liao D."/>
            <person name="Watkins C.C."/>
            <person name="Weier H.-U.G."/>
            <person name="Parra M."/>
            <person name="Huganir R.L."/>
            <person name="Conboy J.G."/>
            <person name="Mohandas N."/>
            <person name="Snyder S.H."/>
        </authorList>
    </citation>
    <scope>NUCLEOTIDE SEQUENCE [MRNA] (ISOFORM 1)</scope>
    <source>
        <tissue>Brain</tissue>
    </source>
</reference>
<reference key="2">
    <citation type="journal article" date="2003" name="DNA Res.">
        <title>Prediction of the coding sequences of mouse homologues of KIAA gene: II. The complete nucleotide sequences of 400 mouse KIAA-homologous cDNAs identified by screening of terminal sequences of cDNA clones randomly sampled from size-fractionated libraries.</title>
        <authorList>
            <person name="Okazaki N."/>
            <person name="Kikuno R."/>
            <person name="Ohara R."/>
            <person name="Inamoto S."/>
            <person name="Aizawa H."/>
            <person name="Yuasa S."/>
            <person name="Nakajima D."/>
            <person name="Nagase T."/>
            <person name="Ohara O."/>
            <person name="Koga H."/>
        </authorList>
    </citation>
    <scope>NUCLEOTIDE SEQUENCE [LARGE SCALE MRNA] (ISOFORM 1)</scope>
    <source>
        <tissue>Brain</tissue>
    </source>
</reference>
<reference key="3">
    <citation type="journal article" date="2005" name="Science">
        <title>The transcriptional landscape of the mammalian genome.</title>
        <authorList>
            <person name="Carninci P."/>
            <person name="Kasukawa T."/>
            <person name="Katayama S."/>
            <person name="Gough J."/>
            <person name="Frith M.C."/>
            <person name="Maeda N."/>
            <person name="Oyama R."/>
            <person name="Ravasi T."/>
            <person name="Lenhard B."/>
            <person name="Wells C."/>
            <person name="Kodzius R."/>
            <person name="Shimokawa K."/>
            <person name="Bajic V.B."/>
            <person name="Brenner S.E."/>
            <person name="Batalov S."/>
            <person name="Forrest A.R."/>
            <person name="Zavolan M."/>
            <person name="Davis M.J."/>
            <person name="Wilming L.G."/>
            <person name="Aidinis V."/>
            <person name="Allen J.E."/>
            <person name="Ambesi-Impiombato A."/>
            <person name="Apweiler R."/>
            <person name="Aturaliya R.N."/>
            <person name="Bailey T.L."/>
            <person name="Bansal M."/>
            <person name="Baxter L."/>
            <person name="Beisel K.W."/>
            <person name="Bersano T."/>
            <person name="Bono H."/>
            <person name="Chalk A.M."/>
            <person name="Chiu K.P."/>
            <person name="Choudhary V."/>
            <person name="Christoffels A."/>
            <person name="Clutterbuck D.R."/>
            <person name="Crowe M.L."/>
            <person name="Dalla E."/>
            <person name="Dalrymple B.P."/>
            <person name="de Bono B."/>
            <person name="Della Gatta G."/>
            <person name="di Bernardo D."/>
            <person name="Down T."/>
            <person name="Engstrom P."/>
            <person name="Fagiolini M."/>
            <person name="Faulkner G."/>
            <person name="Fletcher C.F."/>
            <person name="Fukushima T."/>
            <person name="Furuno M."/>
            <person name="Futaki S."/>
            <person name="Gariboldi M."/>
            <person name="Georgii-Hemming P."/>
            <person name="Gingeras T.R."/>
            <person name="Gojobori T."/>
            <person name="Green R.E."/>
            <person name="Gustincich S."/>
            <person name="Harbers M."/>
            <person name="Hayashi Y."/>
            <person name="Hensch T.K."/>
            <person name="Hirokawa N."/>
            <person name="Hill D."/>
            <person name="Huminiecki L."/>
            <person name="Iacono M."/>
            <person name="Ikeo K."/>
            <person name="Iwama A."/>
            <person name="Ishikawa T."/>
            <person name="Jakt M."/>
            <person name="Kanapin A."/>
            <person name="Katoh M."/>
            <person name="Kawasawa Y."/>
            <person name="Kelso J."/>
            <person name="Kitamura H."/>
            <person name="Kitano H."/>
            <person name="Kollias G."/>
            <person name="Krishnan S.P."/>
            <person name="Kruger A."/>
            <person name="Kummerfeld S.K."/>
            <person name="Kurochkin I.V."/>
            <person name="Lareau L.F."/>
            <person name="Lazarevic D."/>
            <person name="Lipovich L."/>
            <person name="Liu J."/>
            <person name="Liuni S."/>
            <person name="McWilliam S."/>
            <person name="Madan Babu M."/>
            <person name="Madera M."/>
            <person name="Marchionni L."/>
            <person name="Matsuda H."/>
            <person name="Matsuzawa S."/>
            <person name="Miki H."/>
            <person name="Mignone F."/>
            <person name="Miyake S."/>
            <person name="Morris K."/>
            <person name="Mottagui-Tabar S."/>
            <person name="Mulder N."/>
            <person name="Nakano N."/>
            <person name="Nakauchi H."/>
            <person name="Ng P."/>
            <person name="Nilsson R."/>
            <person name="Nishiguchi S."/>
            <person name="Nishikawa S."/>
            <person name="Nori F."/>
            <person name="Ohara O."/>
            <person name="Okazaki Y."/>
            <person name="Orlando V."/>
            <person name="Pang K.C."/>
            <person name="Pavan W.J."/>
            <person name="Pavesi G."/>
            <person name="Pesole G."/>
            <person name="Petrovsky N."/>
            <person name="Piazza S."/>
            <person name="Reed J."/>
            <person name="Reid J.F."/>
            <person name="Ring B.Z."/>
            <person name="Ringwald M."/>
            <person name="Rost B."/>
            <person name="Ruan Y."/>
            <person name="Salzberg S.L."/>
            <person name="Sandelin A."/>
            <person name="Schneider C."/>
            <person name="Schoenbach C."/>
            <person name="Sekiguchi K."/>
            <person name="Semple C.A."/>
            <person name="Seno S."/>
            <person name="Sessa L."/>
            <person name="Sheng Y."/>
            <person name="Shibata Y."/>
            <person name="Shimada H."/>
            <person name="Shimada K."/>
            <person name="Silva D."/>
            <person name="Sinclair B."/>
            <person name="Sperling S."/>
            <person name="Stupka E."/>
            <person name="Sugiura K."/>
            <person name="Sultana R."/>
            <person name="Takenaka Y."/>
            <person name="Taki K."/>
            <person name="Tammoja K."/>
            <person name="Tan S.L."/>
            <person name="Tang S."/>
            <person name="Taylor M.S."/>
            <person name="Tegner J."/>
            <person name="Teichmann S.A."/>
            <person name="Ueda H.R."/>
            <person name="van Nimwegen E."/>
            <person name="Verardo R."/>
            <person name="Wei C.L."/>
            <person name="Yagi K."/>
            <person name="Yamanishi H."/>
            <person name="Zabarovsky E."/>
            <person name="Zhu S."/>
            <person name="Zimmer A."/>
            <person name="Hide W."/>
            <person name="Bult C."/>
            <person name="Grimmond S.M."/>
            <person name="Teasdale R.D."/>
            <person name="Liu E.T."/>
            <person name="Brusic V."/>
            <person name="Quackenbush J."/>
            <person name="Wahlestedt C."/>
            <person name="Mattick J.S."/>
            <person name="Hume D.A."/>
            <person name="Kai C."/>
            <person name="Sasaki D."/>
            <person name="Tomaru Y."/>
            <person name="Fukuda S."/>
            <person name="Kanamori-Katayama M."/>
            <person name="Suzuki M."/>
            <person name="Aoki J."/>
            <person name="Arakawa T."/>
            <person name="Iida J."/>
            <person name="Imamura K."/>
            <person name="Itoh M."/>
            <person name="Kato T."/>
            <person name="Kawaji H."/>
            <person name="Kawagashira N."/>
            <person name="Kawashima T."/>
            <person name="Kojima M."/>
            <person name="Kondo S."/>
            <person name="Konno H."/>
            <person name="Nakano K."/>
            <person name="Ninomiya N."/>
            <person name="Nishio T."/>
            <person name="Okada M."/>
            <person name="Plessy C."/>
            <person name="Shibata K."/>
            <person name="Shiraki T."/>
            <person name="Suzuki S."/>
            <person name="Tagami M."/>
            <person name="Waki K."/>
            <person name="Watahiki A."/>
            <person name="Okamura-Oho Y."/>
            <person name="Suzuki H."/>
            <person name="Kawai J."/>
            <person name="Hayashizaki Y."/>
        </authorList>
    </citation>
    <scope>NUCLEOTIDE SEQUENCE [LARGE SCALE MRNA] (ISOFORM 3)</scope>
    <source>
        <strain>C57BL/6J</strain>
        <strain>NOD</strain>
    </source>
</reference>
<reference key="4">
    <citation type="journal article" date="2004" name="Genome Res.">
        <title>The status, quality, and expansion of the NIH full-length cDNA project: the Mammalian Gene Collection (MGC).</title>
        <authorList>
            <consortium name="The MGC Project Team"/>
        </authorList>
    </citation>
    <scope>NUCLEOTIDE SEQUENCE [LARGE SCALE MRNA] (ISOFORM 2)</scope>
    <source>
        <strain>FVB/N</strain>
        <tissue>Mammary tumor</tissue>
    </source>
</reference>
<reference key="5">
    <citation type="journal article" date="2004" name="Mol. Cell. Proteomics">
        <title>Phosphoproteomic analysis of the developing mouse brain.</title>
        <authorList>
            <person name="Ballif B.A."/>
            <person name="Villen J."/>
            <person name="Beausoleil S.A."/>
            <person name="Schwartz D."/>
            <person name="Gygi S.P."/>
        </authorList>
    </citation>
    <scope>IDENTIFICATION BY MASS SPECTROMETRY [LARGE SCALE ANALYSIS]</scope>
    <source>
        <tissue>Embryonic brain</tissue>
    </source>
</reference>
<reference key="6">
    <citation type="journal article" date="2006" name="Mol. Cell. Proteomics">
        <title>Comprehensive identification of phosphorylation sites in postsynaptic density preparations.</title>
        <authorList>
            <person name="Trinidad J.C."/>
            <person name="Specht C.G."/>
            <person name="Thalhammer A."/>
            <person name="Schoepfer R."/>
            <person name="Burlingame A.L."/>
        </authorList>
    </citation>
    <scope>PHOSPHORYLATION [LARGE SCALE ANALYSIS] AT THR-550</scope>
    <scope>IDENTIFICATION BY MASS SPECTROMETRY [LARGE SCALE ANALYSIS]</scope>
    <source>
        <tissue>Brain</tissue>
    </source>
</reference>
<reference key="7">
    <citation type="journal article" date="2007" name="Mol. Cell. Proteomics">
        <title>Qualitative and quantitative analyses of protein phosphorylation in naive and stimulated mouse synaptosomal preparations.</title>
        <authorList>
            <person name="Munton R.P."/>
            <person name="Tweedie-Cullen R."/>
            <person name="Livingstone-Zatchej M."/>
            <person name="Weinandy F."/>
            <person name="Waidelich M."/>
            <person name="Longo D."/>
            <person name="Gehrig P."/>
            <person name="Potthast F."/>
            <person name="Rutishauser D."/>
            <person name="Gerrits B."/>
            <person name="Panse C."/>
            <person name="Schlapbach R."/>
            <person name="Mansuy I.M."/>
        </authorList>
    </citation>
    <scope>IDENTIFICATION BY MASS SPECTROMETRY [LARGE SCALE ANALYSIS]</scope>
    <source>
        <tissue>Brain cortex</tissue>
    </source>
</reference>
<reference key="8">
    <citation type="journal article" date="2008" name="J. Proteome Res.">
        <title>Large-scale identification and evolution indexing of tyrosine phosphorylation sites from murine brain.</title>
        <authorList>
            <person name="Ballif B.A."/>
            <person name="Carey G.R."/>
            <person name="Sunyaev S.R."/>
            <person name="Gygi S.P."/>
        </authorList>
    </citation>
    <scope>PHOSPHORYLATION [LARGE SCALE ANALYSIS] AT TYR-343</scope>
    <scope>IDENTIFICATION BY MASS SPECTROMETRY [LARGE SCALE ANALYSIS]</scope>
    <source>
        <tissue>Brain</tissue>
    </source>
</reference>
<reference key="9">
    <citation type="journal article" date="2010" name="Cell">
        <title>A tissue-specific atlas of mouse protein phosphorylation and expression.</title>
        <authorList>
            <person name="Huttlin E.L."/>
            <person name="Jedrychowski M.P."/>
            <person name="Elias J.E."/>
            <person name="Goswami T."/>
            <person name="Rad R."/>
            <person name="Beausoleil S.A."/>
            <person name="Villen J."/>
            <person name="Haas W."/>
            <person name="Sowa M.E."/>
            <person name="Gygi S.P."/>
        </authorList>
    </citation>
    <scope>PHOSPHORYLATION [LARGE SCALE ANALYSIS] AT THR-30; SER-378; SER-430; SER-544; SER-546; THR-550; SER-578; SER-639; SER-648; SER-650; SER-665; SER-666; SER-671; SER-677; SER-684; THR-685 AND SER-721</scope>
    <scope>IDENTIFICATION BY MASS SPECTROMETRY [LARGE SCALE ANALYSIS]</scope>
    <source>
        <tissue>Brain</tissue>
        <tissue>Brown adipose tissue</tissue>
        <tissue>Heart</tissue>
        <tissue>Kidney</tissue>
        <tissue>Lung</tissue>
        <tissue>Spleen</tissue>
        <tissue>Testis</tissue>
    </source>
</reference>
<organism>
    <name type="scientific">Mus musculus</name>
    <name type="common">Mouse</name>
    <dbReference type="NCBI Taxonomy" id="10090"/>
    <lineage>
        <taxon>Eukaryota</taxon>
        <taxon>Metazoa</taxon>
        <taxon>Chordata</taxon>
        <taxon>Craniata</taxon>
        <taxon>Vertebrata</taxon>
        <taxon>Euteleostomi</taxon>
        <taxon>Mammalia</taxon>
        <taxon>Eutheria</taxon>
        <taxon>Euarchontoglires</taxon>
        <taxon>Glires</taxon>
        <taxon>Rodentia</taxon>
        <taxon>Myomorpha</taxon>
        <taxon>Muroidea</taxon>
        <taxon>Muridae</taxon>
        <taxon>Murinae</taxon>
        <taxon>Mus</taxon>
        <taxon>Mus</taxon>
    </lineage>
</organism>
<sequence length="879" mass="98315">MTTETGPDSEVKKAQEETPQQPEAAAAVTTPVTPAGHSHPETNSNEKHLTQQDTRPAEQSLDMDDKDYSEADGLSERTTPSKAQKSPQKIAKKFKSAICRVTLLDASEYECEVEKHGRGQVLFDLVCEHLNLLEKDYFGLTFCDADSQKNWLDPSKEIKKQIRSSPWNFAFTVKFYPPDPAQLTEDITRYYLCLQLRADIITGRLPCSFVTHALLGSYAVQAELGDYDAEEHVGNYVSELRFAPNQTRELEERIMELHKTYRGMTPGEAEIHFLENAKKLSMYGVDLHHAKDSEGIDIMLGVCANGLLIYRDRLRINRFAWPKILKISYKRSNFYIKIRPGEYEQFESTIGFKLPNHRSAKRLWKVCIEHHTFFRLVSPEPPPKGFLVMGSKFRYSGRTQAQTRQASALIDRPAPFFERSSSKRYTMSRSLDGAEFSRPASVSENHDAGPEGDKREDDAESGGRRSEAEEGEVRTPTKIKELKPEQETTPRHKQEFLDKPEDVLLKHQASINELKRTLKEPNSKLIHRDRDWDRERRLPSSPASPSPKGTPEKASERAGLREGSEEKVKPPRPRAPESDMGDEDQDQERDAVFLKDNHLAIERKCSSITVSSTSSLEAEVDFTVIGDYHGGAFEDFSRSLPELDRDKSDSETEGLVFAQDLKGPSSQEDESGGLEDSPDRGACSTPEMPQFESVKAETMTVSSLAIRKKIEPEAMLQSRVSAADSTQVDGGTPMVKDFMTTPPCITTETISTTMENSLKSGKGAAAMIPGPQTVATEIRSLSPIIGKDVLTSTYGATAETLSTSTTTHVTKTVKGGFSETRIEKRIIITGDEDVDQDQALALAIKEAKLQHPDMLVTKAVVYRETDPSPEERDKKPQES</sequence>
<dbReference type="EMBL" id="AF061283">
    <property type="protein sequence ID" value="AAC68583.1"/>
    <property type="molecule type" value="mRNA"/>
</dbReference>
<dbReference type="EMBL" id="AK122251">
    <property type="protein sequence ID" value="BAC65533.1"/>
    <property type="status" value="ALT_INIT"/>
    <property type="molecule type" value="mRNA"/>
</dbReference>
<dbReference type="EMBL" id="AK147272">
    <property type="protein sequence ID" value="BAE27810.1"/>
    <property type="molecule type" value="mRNA"/>
</dbReference>
<dbReference type="EMBL" id="AK154704">
    <property type="protein sequence ID" value="BAE32774.1"/>
    <property type="molecule type" value="mRNA"/>
</dbReference>
<dbReference type="EMBL" id="BC034751">
    <property type="protein sequence ID" value="AAH34751.1"/>
    <property type="molecule type" value="mRNA"/>
</dbReference>
<dbReference type="CCDS" id="CCDS16966.1">
    <molecule id="Q9Z2H5-1"/>
</dbReference>
<dbReference type="CCDS" id="CCDS71169.1">
    <molecule id="Q9Z2H5-2"/>
</dbReference>
<dbReference type="RefSeq" id="NP_001006665.1">
    <property type="nucleotide sequence ID" value="NM_001006664.3"/>
</dbReference>
<dbReference type="RefSeq" id="NP_001278049.1">
    <property type="nucleotide sequence ID" value="NM_001291120.1"/>
</dbReference>
<dbReference type="RefSeq" id="NP_001278051.1">
    <property type="nucleotide sequence ID" value="NM_001291122.1"/>
</dbReference>
<dbReference type="RefSeq" id="NP_001278052.1">
    <property type="nucleotide sequence ID" value="NM_001291123.1"/>
</dbReference>
<dbReference type="RefSeq" id="NP_038538.1">
    <property type="nucleotide sequence ID" value="NM_013510.4"/>
</dbReference>
<dbReference type="SMR" id="Q9Z2H5"/>
<dbReference type="BioGRID" id="199459">
    <property type="interactions" value="38"/>
</dbReference>
<dbReference type="FunCoup" id="Q9Z2H5">
    <property type="interactions" value="373"/>
</dbReference>
<dbReference type="IntAct" id="Q9Z2H5">
    <property type="interactions" value="7"/>
</dbReference>
<dbReference type="MINT" id="Q9Z2H5"/>
<dbReference type="STRING" id="10090.ENSMUSP00000029155"/>
<dbReference type="ChEMBL" id="CHEMBL4879527"/>
<dbReference type="GlyGen" id="Q9Z2H5">
    <property type="glycosylation" value="19 sites, 1 N-linked glycan (1 site), 1 O-linked glycan (17 sites)"/>
</dbReference>
<dbReference type="iPTMnet" id="Q9Z2H5"/>
<dbReference type="PhosphoSitePlus" id="Q9Z2H5"/>
<dbReference type="SwissPalm" id="Q9Z2H5"/>
<dbReference type="jPOST" id="Q9Z2H5"/>
<dbReference type="PaxDb" id="10090-ENSMUSP00000099425"/>
<dbReference type="PeptideAtlas" id="Q9Z2H5"/>
<dbReference type="ProteomicsDB" id="277735">
    <molecule id="Q9Z2H5-1"/>
</dbReference>
<dbReference type="ProteomicsDB" id="277736">
    <molecule id="Q9Z2H5-2"/>
</dbReference>
<dbReference type="ProteomicsDB" id="277737">
    <molecule id="Q9Z2H5-3"/>
</dbReference>
<dbReference type="Pumba" id="Q9Z2H5"/>
<dbReference type="DNASU" id="13821"/>
<dbReference type="GeneID" id="13821"/>
<dbReference type="KEGG" id="mmu:13821"/>
<dbReference type="AGR" id="MGI:103010"/>
<dbReference type="CTD" id="2036"/>
<dbReference type="MGI" id="MGI:103010">
    <property type="gene designation" value="Epb41l1"/>
</dbReference>
<dbReference type="eggNOG" id="KOG3527">
    <property type="taxonomic scope" value="Eukaryota"/>
</dbReference>
<dbReference type="InParanoid" id="Q9Z2H5"/>
<dbReference type="OrthoDB" id="6589456at2759"/>
<dbReference type="PhylomeDB" id="Q9Z2H5"/>
<dbReference type="Reactome" id="R-MMU-399719">
    <property type="pathway name" value="Trafficking of AMPA receptors"/>
</dbReference>
<dbReference type="Reactome" id="R-MMU-6794361">
    <property type="pathway name" value="Neurexins and neuroligins"/>
</dbReference>
<dbReference type="BioGRID-ORCS" id="13821">
    <property type="hits" value="0 hits in 45 CRISPR screens"/>
</dbReference>
<dbReference type="CD-CODE" id="CE726F99">
    <property type="entry name" value="Postsynaptic density"/>
</dbReference>
<dbReference type="ChiTaRS" id="Epb41l1">
    <property type="organism name" value="mouse"/>
</dbReference>
<dbReference type="PRO" id="PR:Q9Z2H5"/>
<dbReference type="Proteomes" id="UP000000589">
    <property type="component" value="Unplaced"/>
</dbReference>
<dbReference type="RNAct" id="Q9Z2H5">
    <property type="molecule type" value="protein"/>
</dbReference>
<dbReference type="GO" id="GO:0005856">
    <property type="term" value="C:cytoskeleton"/>
    <property type="evidence" value="ECO:0007669"/>
    <property type="project" value="UniProtKB-SubCell"/>
</dbReference>
<dbReference type="GO" id="GO:0005829">
    <property type="term" value="C:cytosol"/>
    <property type="evidence" value="ECO:0000304"/>
    <property type="project" value="Reactome"/>
</dbReference>
<dbReference type="GO" id="GO:0014069">
    <property type="term" value="C:postsynaptic density"/>
    <property type="evidence" value="ECO:0000314"/>
    <property type="project" value="MGI"/>
</dbReference>
<dbReference type="GO" id="GO:0003779">
    <property type="term" value="F:actin binding"/>
    <property type="evidence" value="ECO:0007669"/>
    <property type="project" value="UniProtKB-KW"/>
</dbReference>
<dbReference type="GO" id="GO:0005198">
    <property type="term" value="F:structural molecule activity"/>
    <property type="evidence" value="ECO:0007669"/>
    <property type="project" value="InterPro"/>
</dbReference>
<dbReference type="GO" id="GO:0030866">
    <property type="term" value="P:cortical actin cytoskeleton organization"/>
    <property type="evidence" value="ECO:0007669"/>
    <property type="project" value="InterPro"/>
</dbReference>
<dbReference type="GO" id="GO:0099145">
    <property type="term" value="P:regulation of exocytic insertion of neurotransmitter receptor to postsynaptic membrane"/>
    <property type="evidence" value="ECO:0000314"/>
    <property type="project" value="SynGO"/>
</dbReference>
<dbReference type="CDD" id="cd14473">
    <property type="entry name" value="FERM_B-lobe"/>
    <property type="match status" value="1"/>
</dbReference>
<dbReference type="CDD" id="cd13184">
    <property type="entry name" value="FERM_C_4_1_family"/>
    <property type="match status" value="1"/>
</dbReference>
<dbReference type="CDD" id="cd17201">
    <property type="entry name" value="FERM_F1_EPB41L1"/>
    <property type="match status" value="1"/>
</dbReference>
<dbReference type="FunFam" id="1.20.80.10:FF:000001">
    <property type="entry name" value="Erythrocyte membrane protein band 4.1"/>
    <property type="match status" value="1"/>
</dbReference>
<dbReference type="FunFam" id="2.30.29.30:FF:000001">
    <property type="entry name" value="Erythrocyte membrane protein band 4.1"/>
    <property type="match status" value="1"/>
</dbReference>
<dbReference type="FunFam" id="3.10.20.90:FF:000002">
    <property type="entry name" value="Erythrocyte protein band 4.1-like 3"/>
    <property type="match status" value="1"/>
</dbReference>
<dbReference type="Gene3D" id="1.20.80.10">
    <property type="match status" value="1"/>
</dbReference>
<dbReference type="Gene3D" id="3.10.20.90">
    <property type="entry name" value="Phosphatidylinositol 3-kinase Catalytic Subunit, Chain A, domain 1"/>
    <property type="match status" value="1"/>
</dbReference>
<dbReference type="Gene3D" id="2.30.29.30">
    <property type="entry name" value="Pleckstrin-homology domain (PH domain)/Phosphotyrosine-binding domain (PTB)"/>
    <property type="match status" value="1"/>
</dbReference>
<dbReference type="InterPro" id="IPR008379">
    <property type="entry name" value="Band_4.1_C"/>
</dbReference>
<dbReference type="InterPro" id="IPR019749">
    <property type="entry name" value="Band_41_domain"/>
</dbReference>
<dbReference type="InterPro" id="IPR000798">
    <property type="entry name" value="Ez/rad/moesin-like"/>
</dbReference>
<dbReference type="InterPro" id="IPR014847">
    <property type="entry name" value="FA"/>
</dbReference>
<dbReference type="InterPro" id="IPR014352">
    <property type="entry name" value="FERM/acyl-CoA-bd_prot_sf"/>
</dbReference>
<dbReference type="InterPro" id="IPR035963">
    <property type="entry name" value="FERM_2"/>
</dbReference>
<dbReference type="InterPro" id="IPR019748">
    <property type="entry name" value="FERM_central"/>
</dbReference>
<dbReference type="InterPro" id="IPR019747">
    <property type="entry name" value="FERM_CS"/>
</dbReference>
<dbReference type="InterPro" id="IPR000299">
    <property type="entry name" value="FERM_domain"/>
</dbReference>
<dbReference type="InterPro" id="IPR018979">
    <property type="entry name" value="FERM_N"/>
</dbReference>
<dbReference type="InterPro" id="IPR018980">
    <property type="entry name" value="FERM_PH-like_C"/>
</dbReference>
<dbReference type="InterPro" id="IPR011993">
    <property type="entry name" value="PH-like_dom_sf"/>
</dbReference>
<dbReference type="InterPro" id="IPR007477">
    <property type="entry name" value="SAB_dom"/>
</dbReference>
<dbReference type="InterPro" id="IPR029071">
    <property type="entry name" value="Ubiquitin-like_domsf"/>
</dbReference>
<dbReference type="PANTHER" id="PTHR23280">
    <property type="entry name" value="4.1 G PROTEIN"/>
    <property type="match status" value="1"/>
</dbReference>
<dbReference type="PANTHER" id="PTHR23280:SF24">
    <property type="entry name" value="BAND 4.1-LIKE PROTEIN 1"/>
    <property type="match status" value="1"/>
</dbReference>
<dbReference type="Pfam" id="PF05902">
    <property type="entry name" value="4_1_CTD"/>
    <property type="match status" value="1"/>
</dbReference>
<dbReference type="Pfam" id="PF08736">
    <property type="entry name" value="FA"/>
    <property type="match status" value="1"/>
</dbReference>
<dbReference type="Pfam" id="PF09380">
    <property type="entry name" value="FERM_C"/>
    <property type="match status" value="1"/>
</dbReference>
<dbReference type="Pfam" id="PF00373">
    <property type="entry name" value="FERM_M"/>
    <property type="match status" value="1"/>
</dbReference>
<dbReference type="Pfam" id="PF09379">
    <property type="entry name" value="FERM_N"/>
    <property type="match status" value="1"/>
</dbReference>
<dbReference type="Pfam" id="PF04382">
    <property type="entry name" value="SAB"/>
    <property type="match status" value="1"/>
</dbReference>
<dbReference type="PIRSF" id="PIRSF002304">
    <property type="entry name" value="Membrane_skeletal_4_1"/>
    <property type="match status" value="1"/>
</dbReference>
<dbReference type="PRINTS" id="PR00935">
    <property type="entry name" value="BAND41"/>
</dbReference>
<dbReference type="PRINTS" id="PR00661">
    <property type="entry name" value="ERMFAMILY"/>
</dbReference>
<dbReference type="SMART" id="SM00295">
    <property type="entry name" value="B41"/>
    <property type="match status" value="1"/>
</dbReference>
<dbReference type="SMART" id="SM01195">
    <property type="entry name" value="FA"/>
    <property type="match status" value="1"/>
</dbReference>
<dbReference type="SMART" id="SM01196">
    <property type="entry name" value="FERM_C"/>
    <property type="match status" value="1"/>
</dbReference>
<dbReference type="SUPFAM" id="SSF50729">
    <property type="entry name" value="PH domain-like"/>
    <property type="match status" value="1"/>
</dbReference>
<dbReference type="SUPFAM" id="SSF47031">
    <property type="entry name" value="Second domain of FERM"/>
    <property type="match status" value="1"/>
</dbReference>
<dbReference type="SUPFAM" id="SSF54236">
    <property type="entry name" value="Ubiquitin-like"/>
    <property type="match status" value="1"/>
</dbReference>
<dbReference type="PROSITE" id="PS00660">
    <property type="entry name" value="FERM_1"/>
    <property type="match status" value="1"/>
</dbReference>
<dbReference type="PROSITE" id="PS00661">
    <property type="entry name" value="FERM_2"/>
    <property type="match status" value="1"/>
</dbReference>
<dbReference type="PROSITE" id="PS50057">
    <property type="entry name" value="FERM_3"/>
    <property type="match status" value="1"/>
</dbReference>
<comment type="function">
    <text>May function to confer stability and plasticity to neuronal membrane via multiple interactions, including the spectrin-actin-based cytoskeleton, integral membrane channels and membrane-associated guanylate kinases.</text>
</comment>
<comment type="subunit">
    <text evidence="1">Interacts with AGAP2.</text>
</comment>
<comment type="subcellular location">
    <subcellularLocation>
        <location>Cytoplasm</location>
        <location>Cytoskeleton</location>
    </subcellularLocation>
</comment>
<comment type="alternative products">
    <event type="alternative splicing"/>
    <isoform>
        <id>Q9Z2H5-1</id>
        <name>1</name>
        <sequence type="displayed"/>
    </isoform>
    <isoform>
        <id>Q9Z2H5-2</id>
        <name>2</name>
        <sequence type="described" ref="VSP_023964"/>
    </isoform>
    <isoform>
        <id>Q9Z2H5-3</id>
        <name>3</name>
        <sequence type="described" ref="VSP_023964 VSP_023965"/>
    </isoform>
</comment>
<comment type="tissue specificity">
    <text>Highest expression in brain, also present in kidney, olfactory epithelium, retina, sensory ganglia, gastrointestinal tract (only enteric neurons) and lung.</text>
</comment>
<comment type="sequence caution" evidence="8">
    <conflict type="erroneous initiation">
        <sequence resource="EMBL-CDS" id="BAC65533"/>
    </conflict>
</comment>
<accession>Q9Z2H5</accession>
<accession>Q3U3L1</accession>
<accession>Q3UHP7</accession>
<accession>Q80U34</accession>
<accession>Q8K204</accession>
<name>E41L1_MOUSE</name>
<proteinExistence type="evidence at protein level"/>